<sequence length="86" mass="9902">MKNLIAELLLKLAQKEEESKELCAQVEALEIIVTAMLRNMAQNDQQRLIEQVDGALYEVKPDASIPDDDTELLRNYVKKLLKHPRQ</sequence>
<name>IRAP_SHIB3</name>
<feature type="chain" id="PRO_1000138496" description="Anti-adapter protein IraP">
    <location>
        <begin position="1"/>
        <end position="86"/>
    </location>
</feature>
<feature type="coiled-coil region" evidence="1">
    <location>
        <begin position="1"/>
        <end position="36"/>
    </location>
</feature>
<dbReference type="EMBL" id="CP001063">
    <property type="protein sequence ID" value="ACD09386.1"/>
    <property type="molecule type" value="Genomic_DNA"/>
</dbReference>
<dbReference type="RefSeq" id="WP_000792980.1">
    <property type="nucleotide sequence ID" value="NC_010658.1"/>
</dbReference>
<dbReference type="SMR" id="B2U3Y5"/>
<dbReference type="KEGG" id="sbc:SbBS512_E0299"/>
<dbReference type="HOGENOM" id="CLU_169517_0_0_6"/>
<dbReference type="Proteomes" id="UP000001030">
    <property type="component" value="Chromosome"/>
</dbReference>
<dbReference type="GO" id="GO:0005737">
    <property type="term" value="C:cytoplasm"/>
    <property type="evidence" value="ECO:0007669"/>
    <property type="project" value="UniProtKB-SubCell"/>
</dbReference>
<dbReference type="GO" id="GO:0009267">
    <property type="term" value="P:cellular response to starvation"/>
    <property type="evidence" value="ECO:0007669"/>
    <property type="project" value="UniProtKB-UniRule"/>
</dbReference>
<dbReference type="HAMAP" id="MF_01198">
    <property type="entry name" value="Anti_adapt_IraP"/>
    <property type="match status" value="1"/>
</dbReference>
<dbReference type="InterPro" id="IPR019732">
    <property type="entry name" value="SigmaS_Anti-adapt_IraP"/>
</dbReference>
<dbReference type="NCBIfam" id="NF007598">
    <property type="entry name" value="PRK10244.1"/>
    <property type="match status" value="1"/>
</dbReference>
<dbReference type="Pfam" id="PF10796">
    <property type="entry name" value="Anti-adapt_IraP"/>
    <property type="match status" value="1"/>
</dbReference>
<organism>
    <name type="scientific">Shigella boydii serotype 18 (strain CDC 3083-94 / BS512)</name>
    <dbReference type="NCBI Taxonomy" id="344609"/>
    <lineage>
        <taxon>Bacteria</taxon>
        <taxon>Pseudomonadati</taxon>
        <taxon>Pseudomonadota</taxon>
        <taxon>Gammaproteobacteria</taxon>
        <taxon>Enterobacterales</taxon>
        <taxon>Enterobacteriaceae</taxon>
        <taxon>Shigella</taxon>
    </lineage>
</organism>
<gene>
    <name evidence="1" type="primary">iraP</name>
    <name type="ordered locus">SbBS512_E0299</name>
</gene>
<keyword id="KW-0175">Coiled coil</keyword>
<keyword id="KW-0963">Cytoplasm</keyword>
<keyword id="KW-1185">Reference proteome</keyword>
<keyword id="KW-0346">Stress response</keyword>
<comment type="function">
    <text evidence="1">Inhibits RpoS proteolysis by regulating RssB activity, thereby increasing the stability of the sigma stress factor RpoS especially during phosphate starvation, but also in stationary phase and during nitrogen starvation. Its effect on RpoS stability is due to its interaction with RssB, which probably blocks the interaction of RssB with RpoS, and the consequent delivery of the RssB-RpoS complex to the ClpXP protein degradation pathway.</text>
</comment>
<comment type="subunit">
    <text evidence="1">Interacts with RssB.</text>
</comment>
<comment type="subcellular location">
    <subcellularLocation>
        <location evidence="1">Cytoplasm</location>
    </subcellularLocation>
</comment>
<comment type="similarity">
    <text evidence="1">Belongs to the IraP family.</text>
</comment>
<protein>
    <recommendedName>
        <fullName evidence="1">Anti-adapter protein IraP</fullName>
    </recommendedName>
</protein>
<proteinExistence type="inferred from homology"/>
<evidence type="ECO:0000255" key="1">
    <source>
        <dbReference type="HAMAP-Rule" id="MF_01198"/>
    </source>
</evidence>
<reference key="1">
    <citation type="submission" date="2008-05" db="EMBL/GenBank/DDBJ databases">
        <title>Complete sequence of Shigella boydii serotype 18 strain BS512.</title>
        <authorList>
            <person name="Rasko D.A."/>
            <person name="Rosovitz M."/>
            <person name="Maurelli A.T."/>
            <person name="Myers G."/>
            <person name="Seshadri R."/>
            <person name="Cer R."/>
            <person name="Jiang L."/>
            <person name="Ravel J."/>
            <person name="Sebastian Y."/>
        </authorList>
    </citation>
    <scope>NUCLEOTIDE SEQUENCE [LARGE SCALE GENOMIC DNA]</scope>
    <source>
        <strain>CDC 3083-94 / BS512</strain>
    </source>
</reference>
<accession>B2U3Y5</accession>